<reference key="1">
    <citation type="submission" date="1999-01" db="EMBL/GenBank/DDBJ databases">
        <title>Sequence analysis of the reovirus Type 2 Jones M1 gene.</title>
        <authorList>
            <person name="Yin P."/>
            <person name="Keirstead N.D."/>
            <person name="Coombs K.M."/>
        </authorList>
    </citation>
    <scope>NUCLEOTIDE SEQUENCE [GENOMIC RNA]</scope>
</reference>
<name>MU2_REOVJ</name>
<sequence>MAYVAVPAVVDSRSSEAIGLLESFGVTATKEESDVQYQDHDYVLDQLQYMLDGYEAGDVIDALVYRNWLHESVYCLLPPKSQLLEYWKSNPAVIPESVDRRLRKRLMMKKDLRKDDEYNQLVRAFKLSDVYTPLVSSSTSPMTMIQSINQNQIVYSTTDRVIGARISLYAPRKYYSATLSFTLNRCIIPYGKNVAPIGHARFNIGTFPSLASPKCFVLSSVDIESIPNEFIKLFYQRVRSVHANILNDISPQLLSDMLQRKRLRVSSPNERKIAQIMHLPYHVKRGATHVDVYRVDVVDVLFEVVDIKDGLRSVSRKLTLQTVPVSVIELIGLETADYCIRKENGMFTDWFLLLTMLSDGLIDRRTHSQYLINPSSIPPDVIINIYVSGFTNRRVIDVMPEMYDFVKPIGAVLPKGSFKSTIMRVLDEMEVLGVRIMPRCHVVDSDEVGERMQPTFEHAVMEIYKGIAGVDSLEELINWVLGPDLIPHDERLGKLYQSFLPLAKDLLAPVARHFYEESLSEGRLLTFAHADSELLNANYFGHLLRLKIPFITEVNLMIRKNREGGELFQLVLSYLYKMYATSAQPMWFGSLLRLMICPWLHMEKLIGDADAAITSAEVGWHIPKEHLMQDGWCGCEDGFITYVVIRAPKLVLEELREKNWGQYHAQVIVTDRLEVGEPRRVHARVVIKGNHMPSKLISRYACFSLTMRYMMHLTCGHSIGRSSAYGARLVFRSSLA</sequence>
<organismHost>
    <name type="scientific">Mammalia</name>
    <dbReference type="NCBI Taxonomy" id="40674"/>
</organismHost>
<protein>
    <recommendedName>
        <fullName>Microtubule-associated protein mu-2</fullName>
        <shortName>Mu2</shortName>
    </recommendedName>
</protein>
<feature type="chain" id="PRO_0000345001" description="Microtubule-associated protein mu-2">
    <location>
        <begin position="1"/>
        <end position="736"/>
    </location>
</feature>
<organism>
    <name type="scientific">Reovirus type 2 (strain D5/Jones)</name>
    <name type="common">T2J</name>
    <name type="synonym">Mammalian orthoreovirus 2</name>
    <dbReference type="NCBI Taxonomy" id="10885"/>
    <lineage>
        <taxon>Viruses</taxon>
        <taxon>Riboviria</taxon>
        <taxon>Orthornavirae</taxon>
        <taxon>Duplornaviricota</taxon>
        <taxon>Resentoviricetes</taxon>
        <taxon>Reovirales</taxon>
        <taxon>Spinareoviridae</taxon>
        <taxon>Orthoreovirus</taxon>
        <taxon>Mammalian orthoreovirus</taxon>
    </lineage>
</organism>
<comment type="function">
    <text evidence="1">Minor inner capsid (core) component. Displays NTPase and RNA 5'-triphosphatase (RTPase) activities. ATP is the preferred substrate for hydrolysis. May function as a cofactor of polymerase lambda-3. Associates with microtubules and plays a role in the formation, structural organization and morphology of viral inclusions, where the assembly of cores and the replication of viral RNA occur. Together with mu-NS, recruits the other core proteins to these inclusions (By similarity).</text>
</comment>
<comment type="cofactor">
    <cofactor evidence="1">
        <name>a divalent metal cation</name>
        <dbReference type="ChEBI" id="CHEBI:60240"/>
    </cofactor>
</comment>
<comment type="subunit">
    <text evidence="1">Interacts with protein mu-NS; in viral inclusions. Interacts with polymerase lambda-3; this interaction stimulates the ATPase activity of mu-2 (By similarity).</text>
</comment>
<comment type="subcellular location">
    <subcellularLocation>
        <location evidence="2">Virion</location>
    </subcellularLocation>
    <subcellularLocation>
        <location evidence="1">Host cytoplasm</location>
        <location evidence="1">Host cytoskeleton</location>
    </subcellularLocation>
    <text evidence="1">Found in the inner capsid (12 copies). Associates with microtubules (By similarity).</text>
</comment>
<comment type="similarity">
    <text evidence="2">Belongs to the orthoreovirus mu-2 protein family.</text>
</comment>
<evidence type="ECO:0000250" key="1"/>
<evidence type="ECO:0000305" key="2"/>
<keyword id="KW-0167">Capsid protein</keyword>
<keyword id="KW-1035">Host cytoplasm</keyword>
<keyword id="KW-1037">Host cytoskeleton</keyword>
<keyword id="KW-0945">Host-virus interaction</keyword>
<keyword id="KW-1090">Inhibition of host innate immune response by virus</keyword>
<keyword id="KW-1114">Inhibition of host interferon signaling pathway by virus</keyword>
<keyword id="KW-1094">Inhibition of host IRF9 by virus</keyword>
<keyword id="KW-0922">Interferon antiviral system evasion</keyword>
<keyword id="KW-0899">Viral immunoevasion</keyword>
<keyword id="KW-0946">Virion</keyword>
<accession>Q91PK4</accession>
<dbReference type="EMBL" id="AF124519">
    <property type="protein sequence ID" value="AAK54467.1"/>
    <property type="molecule type" value="Genomic_RNA"/>
</dbReference>
<dbReference type="SMR" id="Q91PK4"/>
<dbReference type="Proteomes" id="UP000006370">
    <property type="component" value="Genome"/>
</dbReference>
<dbReference type="GO" id="GO:0030430">
    <property type="term" value="C:host cell cytoplasm"/>
    <property type="evidence" value="ECO:0007669"/>
    <property type="project" value="UniProtKB-KW"/>
</dbReference>
<dbReference type="GO" id="GO:0044163">
    <property type="term" value="C:host cytoskeleton"/>
    <property type="evidence" value="ECO:0007669"/>
    <property type="project" value="UniProtKB-SubCell"/>
</dbReference>
<dbReference type="GO" id="GO:0019028">
    <property type="term" value="C:viral capsid"/>
    <property type="evidence" value="ECO:0007669"/>
    <property type="project" value="UniProtKB-KW"/>
</dbReference>
<dbReference type="GO" id="GO:0005198">
    <property type="term" value="F:structural molecule activity"/>
    <property type="evidence" value="ECO:0007669"/>
    <property type="project" value="InterPro"/>
</dbReference>
<dbReference type="GO" id="GO:0039560">
    <property type="term" value="P:symbiont-mediated suppression of host JAK-STAT cascade via inhibition of host IRF9 activity"/>
    <property type="evidence" value="ECO:0007669"/>
    <property type="project" value="UniProtKB-KW"/>
</dbReference>
<dbReference type="GO" id="GO:0039502">
    <property type="term" value="P:symbiont-mediated suppression of host type I interferon-mediated signaling pathway"/>
    <property type="evidence" value="ECO:0007669"/>
    <property type="project" value="UniProtKB-KW"/>
</dbReference>
<dbReference type="InterPro" id="IPR012494">
    <property type="entry name" value="Reovirus_Mu2"/>
</dbReference>
<dbReference type="Pfam" id="PF07781">
    <property type="entry name" value="Reovirus_Mu2"/>
    <property type="match status" value="1"/>
</dbReference>
<proteinExistence type="inferred from homology"/>
<gene>
    <name type="primary">M1</name>
</gene>